<accession>Q8UWA5</accession>
<evidence type="ECO:0000250" key="1">
    <source>
        <dbReference type="UniProtKB" id="P00918"/>
    </source>
</evidence>
<evidence type="ECO:0000255" key="2">
    <source>
        <dbReference type="PROSITE-ProRule" id="PRU01134"/>
    </source>
</evidence>
<evidence type="ECO:0000305" key="3"/>
<name>CAH2_PSEHK</name>
<comment type="function">
    <text evidence="1">Catalyzes the reversible hydration of carbon dioxide.</text>
</comment>
<comment type="catalytic activity">
    <reaction evidence="1">
        <text>hydrogencarbonate + H(+) = CO2 + H2O</text>
        <dbReference type="Rhea" id="RHEA:10748"/>
        <dbReference type="ChEBI" id="CHEBI:15377"/>
        <dbReference type="ChEBI" id="CHEBI:15378"/>
        <dbReference type="ChEBI" id="CHEBI:16526"/>
        <dbReference type="ChEBI" id="CHEBI:17544"/>
        <dbReference type="EC" id="4.2.1.1"/>
    </reaction>
</comment>
<comment type="cofactor">
    <cofactor evidence="1">
        <name>Zn(2+)</name>
        <dbReference type="ChEBI" id="CHEBI:29105"/>
    </cofactor>
</comment>
<comment type="subcellular location">
    <subcellularLocation>
        <location evidence="1">Cytoplasm</location>
    </subcellularLocation>
</comment>
<comment type="similarity">
    <text evidence="3">Belongs to the alpha-carbonic anhydrase family.</text>
</comment>
<reference key="1">
    <citation type="journal article" date="2003" name="Am. J. Physiol.">
        <title>Mechanism of acid adaptation of a fish living in a pH 3.5 lake.</title>
        <authorList>
            <person name="Hirata T."/>
            <person name="Kaneko T."/>
            <person name="Ono T."/>
            <person name="Nakazato T."/>
            <person name="Furukawa N."/>
            <person name="Hasegawa S."/>
            <person name="Wakabayashi S."/>
            <person name="Shigekawa M."/>
            <person name="Chang M.H."/>
            <person name="Romero M.F."/>
            <person name="Hirose S."/>
        </authorList>
    </citation>
    <scope>NUCLEOTIDE SEQUENCE [MRNA]</scope>
</reference>
<keyword id="KW-0963">Cytoplasm</keyword>
<keyword id="KW-0456">Lyase</keyword>
<keyword id="KW-0479">Metal-binding</keyword>
<keyword id="KW-0862">Zinc</keyword>
<organism>
    <name type="scientific">Pseudaspius hakonensis</name>
    <name type="common">Big-scaled redfin</name>
    <name type="synonym">Tribolodon hakonensis</name>
    <dbReference type="NCBI Taxonomy" id="3004147"/>
    <lineage>
        <taxon>Eukaryota</taxon>
        <taxon>Metazoa</taxon>
        <taxon>Chordata</taxon>
        <taxon>Craniata</taxon>
        <taxon>Vertebrata</taxon>
        <taxon>Euteleostomi</taxon>
        <taxon>Actinopterygii</taxon>
        <taxon>Neopterygii</taxon>
        <taxon>Teleostei</taxon>
        <taxon>Ostariophysi</taxon>
        <taxon>Cypriniformes</taxon>
        <taxon>Leuciscidae</taxon>
        <taxon>Pseudaspininae</taxon>
        <taxon>Pseudaspius</taxon>
    </lineage>
</organism>
<dbReference type="EC" id="4.2.1.1" evidence="1"/>
<dbReference type="EMBL" id="AB055617">
    <property type="protein sequence ID" value="BAB83090.1"/>
    <property type="molecule type" value="mRNA"/>
</dbReference>
<dbReference type="SMR" id="Q8UWA5"/>
<dbReference type="GO" id="GO:0005737">
    <property type="term" value="C:cytoplasm"/>
    <property type="evidence" value="ECO:0000250"/>
    <property type="project" value="UniProtKB"/>
</dbReference>
<dbReference type="GO" id="GO:0005886">
    <property type="term" value="C:plasma membrane"/>
    <property type="evidence" value="ECO:0000250"/>
    <property type="project" value="UniProtKB"/>
</dbReference>
<dbReference type="GO" id="GO:0004089">
    <property type="term" value="F:carbonate dehydratase activity"/>
    <property type="evidence" value="ECO:0007669"/>
    <property type="project" value="UniProtKB-EC"/>
</dbReference>
<dbReference type="GO" id="GO:0008270">
    <property type="term" value="F:zinc ion binding"/>
    <property type="evidence" value="ECO:0007669"/>
    <property type="project" value="InterPro"/>
</dbReference>
<dbReference type="GO" id="GO:0015670">
    <property type="term" value="P:carbon dioxide transport"/>
    <property type="evidence" value="ECO:0007669"/>
    <property type="project" value="TreeGrafter"/>
</dbReference>
<dbReference type="GO" id="GO:0006885">
    <property type="term" value="P:regulation of pH"/>
    <property type="evidence" value="ECO:0007669"/>
    <property type="project" value="TreeGrafter"/>
</dbReference>
<dbReference type="FunFam" id="3.10.200.10:FF:000001">
    <property type="entry name" value="Carbonic anhydrase 2"/>
    <property type="match status" value="1"/>
</dbReference>
<dbReference type="Gene3D" id="3.10.200.10">
    <property type="entry name" value="Alpha carbonic anhydrase"/>
    <property type="match status" value="1"/>
</dbReference>
<dbReference type="InterPro" id="IPR001148">
    <property type="entry name" value="CA_dom"/>
</dbReference>
<dbReference type="InterPro" id="IPR036398">
    <property type="entry name" value="CA_dom_sf"/>
</dbReference>
<dbReference type="InterPro" id="IPR023561">
    <property type="entry name" value="Carbonic_anhydrase_a-class"/>
</dbReference>
<dbReference type="InterPro" id="IPR018338">
    <property type="entry name" value="Carbonic_anhydrase_a-class_CS"/>
</dbReference>
<dbReference type="PANTHER" id="PTHR18952">
    <property type="entry name" value="CARBONIC ANHYDRASE"/>
    <property type="match status" value="1"/>
</dbReference>
<dbReference type="PANTHER" id="PTHR18952:SF120">
    <property type="entry name" value="CARBONIC ANHYDRASE 2"/>
    <property type="match status" value="1"/>
</dbReference>
<dbReference type="Pfam" id="PF00194">
    <property type="entry name" value="Carb_anhydrase"/>
    <property type="match status" value="1"/>
</dbReference>
<dbReference type="SMART" id="SM01057">
    <property type="entry name" value="Carb_anhydrase"/>
    <property type="match status" value="1"/>
</dbReference>
<dbReference type="SUPFAM" id="SSF51069">
    <property type="entry name" value="Carbonic anhydrase"/>
    <property type="match status" value="1"/>
</dbReference>
<dbReference type="PROSITE" id="PS00162">
    <property type="entry name" value="ALPHA_CA_1"/>
    <property type="match status" value="1"/>
</dbReference>
<dbReference type="PROSITE" id="PS51144">
    <property type="entry name" value="ALPHA_CA_2"/>
    <property type="match status" value="1"/>
</dbReference>
<proteinExistence type="evidence at transcript level"/>
<protein>
    <recommendedName>
        <fullName>Carbonic anhydrase 2</fullName>
        <ecNumber evidence="1">4.2.1.1</ecNumber>
    </recommendedName>
    <alternativeName>
        <fullName>Carbonate dehydratase II</fullName>
    </alternativeName>
    <alternativeName>
        <fullName>Carbonic anhydrase II</fullName>
        <shortName>CA-II</shortName>
    </alternativeName>
</protein>
<gene>
    <name type="primary">ca2</name>
</gene>
<sequence length="260" mass="29133">MSHGWGYADHNGPQKWCENFPIANGPRQSPIDIQTKGASYDDTLKPLKLKYDPTTSLDILNNGHSFQVTFADDNDSSMLTEGPISGKYRLKQFHFHWGASDGKGSEHTVDGKCYPAELHLVHWNTKYASFGEAANKPDGLAVVGVFLQIGEDNPKLQKILDAMDAIKSKGKQTSFTNFDPTCLLPKSLEYWTYPGSLTTPPLYESVTWIVCKQPISVSSEQMKKFRSLLFTAEEEKACCMVNNYRPPQPLKDRKVCASFK</sequence>
<feature type="initiator methionine" description="Removed" evidence="1">
    <location>
        <position position="1"/>
    </location>
</feature>
<feature type="chain" id="PRO_0000077424" description="Carbonic anhydrase 2">
    <location>
        <begin position="2"/>
        <end position="260"/>
    </location>
</feature>
<feature type="domain" description="Alpha-carbonic anhydrase" evidence="2">
    <location>
        <begin position="3"/>
        <end position="259"/>
    </location>
</feature>
<feature type="active site" description="Proton donor/acceptor" evidence="1">
    <location>
        <position position="64"/>
    </location>
</feature>
<feature type="binding site" evidence="2">
    <location>
        <position position="94"/>
    </location>
    <ligand>
        <name>Zn(2+)</name>
        <dbReference type="ChEBI" id="CHEBI:29105"/>
        <note>catalytic</note>
    </ligand>
</feature>
<feature type="binding site" evidence="2">
    <location>
        <position position="96"/>
    </location>
    <ligand>
        <name>Zn(2+)</name>
        <dbReference type="ChEBI" id="CHEBI:29105"/>
        <note>catalytic</note>
    </ligand>
</feature>
<feature type="binding site" evidence="2">
    <location>
        <position position="119"/>
    </location>
    <ligand>
        <name>Zn(2+)</name>
        <dbReference type="ChEBI" id="CHEBI:29105"/>
        <note>catalytic</note>
    </ligand>
</feature>
<feature type="binding site" evidence="1">
    <location>
        <begin position="198"/>
        <end position="199"/>
    </location>
    <ligand>
        <name>substrate</name>
    </ligand>
</feature>
<feature type="site" description="Fine-tunes the proton-transfer properties of H-64" evidence="1">
    <location>
        <position position="7"/>
    </location>
</feature>
<feature type="site" description="Fine-tunes the proton-transfer properties of H-64" evidence="1">
    <location>
        <position position="62"/>
    </location>
</feature>